<organism>
    <name type="scientific">Escherichia coli O17:K52:H18 (strain UMN026 / ExPEC)</name>
    <dbReference type="NCBI Taxonomy" id="585056"/>
    <lineage>
        <taxon>Bacteria</taxon>
        <taxon>Pseudomonadati</taxon>
        <taxon>Pseudomonadota</taxon>
        <taxon>Gammaproteobacteria</taxon>
        <taxon>Enterobacterales</taxon>
        <taxon>Enterobacteriaceae</taxon>
        <taxon>Escherichia</taxon>
    </lineage>
</organism>
<evidence type="ECO:0000255" key="1">
    <source>
        <dbReference type="HAMAP-Rule" id="MF_01950"/>
    </source>
</evidence>
<feature type="chain" id="PRO_1000188805" description="Acyl carrier protein phosphodiesterase">
    <location>
        <begin position="1"/>
        <end position="193"/>
    </location>
</feature>
<proteinExistence type="inferred from homology"/>
<protein>
    <recommendedName>
        <fullName evidence="1">Acyl carrier protein phosphodiesterase</fullName>
        <shortName evidence="1">ACP phosphodiesterase</shortName>
        <ecNumber evidence="1">3.1.4.14</ecNumber>
    </recommendedName>
</protein>
<comment type="function">
    <text evidence="1">Converts holo-ACP to apo-ACP by hydrolytic cleavage of the phosphopantetheine prosthetic group from ACP.</text>
</comment>
<comment type="catalytic activity">
    <reaction evidence="1">
        <text>holo-[ACP] + H2O = apo-[ACP] + (R)-4'-phosphopantetheine + H(+)</text>
        <dbReference type="Rhea" id="RHEA:20537"/>
        <dbReference type="Rhea" id="RHEA-COMP:9685"/>
        <dbReference type="Rhea" id="RHEA-COMP:9690"/>
        <dbReference type="ChEBI" id="CHEBI:15377"/>
        <dbReference type="ChEBI" id="CHEBI:15378"/>
        <dbReference type="ChEBI" id="CHEBI:29999"/>
        <dbReference type="ChEBI" id="CHEBI:61723"/>
        <dbReference type="ChEBI" id="CHEBI:64479"/>
        <dbReference type="EC" id="3.1.4.14"/>
    </reaction>
</comment>
<comment type="similarity">
    <text evidence="1">Belongs to the AcpH family.</text>
</comment>
<gene>
    <name evidence="1" type="primary">acpH</name>
    <name type="ordered locus">ECUMN_0442</name>
</gene>
<name>ACPH_ECOLU</name>
<accession>B7N8V6</accession>
<keyword id="KW-0275">Fatty acid biosynthesis</keyword>
<keyword id="KW-0276">Fatty acid metabolism</keyword>
<keyword id="KW-0378">Hydrolase</keyword>
<keyword id="KW-0444">Lipid biosynthesis</keyword>
<keyword id="KW-0443">Lipid metabolism</keyword>
<reference key="1">
    <citation type="journal article" date="2009" name="PLoS Genet.">
        <title>Organised genome dynamics in the Escherichia coli species results in highly diverse adaptive paths.</title>
        <authorList>
            <person name="Touchon M."/>
            <person name="Hoede C."/>
            <person name="Tenaillon O."/>
            <person name="Barbe V."/>
            <person name="Baeriswyl S."/>
            <person name="Bidet P."/>
            <person name="Bingen E."/>
            <person name="Bonacorsi S."/>
            <person name="Bouchier C."/>
            <person name="Bouvet O."/>
            <person name="Calteau A."/>
            <person name="Chiapello H."/>
            <person name="Clermont O."/>
            <person name="Cruveiller S."/>
            <person name="Danchin A."/>
            <person name="Diard M."/>
            <person name="Dossat C."/>
            <person name="Karoui M.E."/>
            <person name="Frapy E."/>
            <person name="Garry L."/>
            <person name="Ghigo J.M."/>
            <person name="Gilles A.M."/>
            <person name="Johnson J."/>
            <person name="Le Bouguenec C."/>
            <person name="Lescat M."/>
            <person name="Mangenot S."/>
            <person name="Martinez-Jehanne V."/>
            <person name="Matic I."/>
            <person name="Nassif X."/>
            <person name="Oztas S."/>
            <person name="Petit M.A."/>
            <person name="Pichon C."/>
            <person name="Rouy Z."/>
            <person name="Ruf C.S."/>
            <person name="Schneider D."/>
            <person name="Tourret J."/>
            <person name="Vacherie B."/>
            <person name="Vallenet D."/>
            <person name="Medigue C."/>
            <person name="Rocha E.P.C."/>
            <person name="Denamur E."/>
        </authorList>
    </citation>
    <scope>NUCLEOTIDE SEQUENCE [LARGE SCALE GENOMIC DNA]</scope>
    <source>
        <strain>UMN026 / ExPEC</strain>
    </source>
</reference>
<dbReference type="EC" id="3.1.4.14" evidence="1"/>
<dbReference type="EMBL" id="CU928163">
    <property type="protein sequence ID" value="CAR11657.1"/>
    <property type="molecule type" value="Genomic_DNA"/>
</dbReference>
<dbReference type="RefSeq" id="WP_001009885.1">
    <property type="nucleotide sequence ID" value="NC_011751.1"/>
</dbReference>
<dbReference type="RefSeq" id="YP_002411205.1">
    <property type="nucleotide sequence ID" value="NC_011751.1"/>
</dbReference>
<dbReference type="SMR" id="B7N8V6"/>
<dbReference type="STRING" id="585056.ECUMN_0442"/>
<dbReference type="KEGG" id="eum:ECUMN_0442"/>
<dbReference type="PATRIC" id="fig|585056.7.peg.645"/>
<dbReference type="HOGENOM" id="CLU_099370_1_0_6"/>
<dbReference type="Proteomes" id="UP000007097">
    <property type="component" value="Chromosome"/>
</dbReference>
<dbReference type="GO" id="GO:0008770">
    <property type="term" value="F:[acyl-carrier-protein] phosphodiesterase activity"/>
    <property type="evidence" value="ECO:0007669"/>
    <property type="project" value="UniProtKB-UniRule"/>
</dbReference>
<dbReference type="GO" id="GO:0006633">
    <property type="term" value="P:fatty acid biosynthetic process"/>
    <property type="evidence" value="ECO:0007669"/>
    <property type="project" value="UniProtKB-UniRule"/>
</dbReference>
<dbReference type="HAMAP" id="MF_01950">
    <property type="entry name" value="AcpH"/>
    <property type="match status" value="1"/>
</dbReference>
<dbReference type="InterPro" id="IPR007431">
    <property type="entry name" value="ACP_PD"/>
</dbReference>
<dbReference type="InterPro" id="IPR023491">
    <property type="entry name" value="ACP_phosphodiesterase_gpbac"/>
</dbReference>
<dbReference type="NCBIfam" id="NF007466">
    <property type="entry name" value="PRK10045.1"/>
    <property type="match status" value="1"/>
</dbReference>
<dbReference type="PANTHER" id="PTHR38764">
    <property type="entry name" value="ACYL CARRIER PROTEIN PHOSPHODIESTERASE"/>
    <property type="match status" value="1"/>
</dbReference>
<dbReference type="PANTHER" id="PTHR38764:SF1">
    <property type="entry name" value="ACYL CARRIER PROTEIN PHOSPHODIESTERASE"/>
    <property type="match status" value="1"/>
</dbReference>
<dbReference type="Pfam" id="PF04336">
    <property type="entry name" value="ACP_PD"/>
    <property type="match status" value="1"/>
</dbReference>
<dbReference type="PIRSF" id="PIRSF011489">
    <property type="entry name" value="DUF479"/>
    <property type="match status" value="1"/>
</dbReference>
<sequence>MNFLAHLHLAHLAESSLSGNLLADFVRGNPEESFPPDVVAGIHMHRRIDVLTDNLPEVREAREWFRSETRRVAPITLDVMWDHFLSRHWSQLSPDFPLQEFVCYAREQVMTILPDSPPRFINLNNYLWSEQWLVRYRDMDFIQNVLNGMASRRPRLDALRDSWYDLDAHYDALETRFWQFYPRMMAQASRKAL</sequence>